<sequence length="112" mass="12126">MLELVKVLGLFAITALAEIIGCYLPWLVLTQQRPVWLLIPAAVSLGLFAWLLTLHPGAAGRIYAAYGGVYVAIALIWLWRIDGVVPTRWDLVGSAVSLAGMAIIMLQPARSV</sequence>
<keyword id="KW-0997">Cell inner membrane</keyword>
<keyword id="KW-1003">Cell membrane</keyword>
<keyword id="KW-0472">Membrane</keyword>
<keyword id="KW-0812">Transmembrane</keyword>
<keyword id="KW-1133">Transmembrane helix</keyword>
<organism>
    <name type="scientific">Dechloromonas aromatica (strain RCB)</name>
    <dbReference type="NCBI Taxonomy" id="159087"/>
    <lineage>
        <taxon>Bacteria</taxon>
        <taxon>Pseudomonadati</taxon>
        <taxon>Pseudomonadota</taxon>
        <taxon>Betaproteobacteria</taxon>
        <taxon>Rhodocyclales</taxon>
        <taxon>Azonexaceae</taxon>
        <taxon>Dechloromonas</taxon>
    </lineage>
</organism>
<accession>Q47CR9</accession>
<gene>
    <name type="ordered locus">Daro_2632</name>
</gene>
<comment type="subcellular location">
    <subcellularLocation>
        <location evidence="1">Cell inner membrane</location>
        <topology evidence="1">Multi-pass membrane protein</topology>
    </subcellularLocation>
</comment>
<comment type="similarity">
    <text evidence="1">Belongs to the UPF0060 family.</text>
</comment>
<reference key="1">
    <citation type="journal article" date="2009" name="BMC Genomics">
        <title>Metabolic analysis of the soil microbe Dechloromonas aromatica str. RCB: indications of a surprisingly complex life-style and cryptic anaerobic pathways for aromatic degradation.</title>
        <authorList>
            <person name="Salinero K.K."/>
            <person name="Keller K."/>
            <person name="Feil W.S."/>
            <person name="Feil H."/>
            <person name="Trong S."/>
            <person name="Di Bartolo G."/>
            <person name="Lapidus A."/>
        </authorList>
    </citation>
    <scope>NUCLEOTIDE SEQUENCE [LARGE SCALE GENOMIC DNA]</scope>
    <source>
        <strain>RCB</strain>
    </source>
</reference>
<feature type="chain" id="PRO_0000282219" description="UPF0060 membrane protein Daro_2632">
    <location>
        <begin position="1"/>
        <end position="112"/>
    </location>
</feature>
<feature type="transmembrane region" description="Helical" evidence="1">
    <location>
        <begin position="7"/>
        <end position="27"/>
    </location>
</feature>
<feature type="transmembrane region" description="Helical" evidence="1">
    <location>
        <begin position="34"/>
        <end position="54"/>
    </location>
</feature>
<feature type="transmembrane region" description="Helical" evidence="1">
    <location>
        <begin position="59"/>
        <end position="79"/>
    </location>
</feature>
<feature type="transmembrane region" description="Helical" evidence="1">
    <location>
        <begin position="89"/>
        <end position="109"/>
    </location>
</feature>
<proteinExistence type="inferred from homology"/>
<evidence type="ECO:0000255" key="1">
    <source>
        <dbReference type="HAMAP-Rule" id="MF_00010"/>
    </source>
</evidence>
<name>Y2632_DECAR</name>
<dbReference type="EMBL" id="CP000089">
    <property type="protein sequence ID" value="AAZ47362.1"/>
    <property type="molecule type" value="Genomic_DNA"/>
</dbReference>
<dbReference type="SMR" id="Q47CR9"/>
<dbReference type="STRING" id="159087.Daro_2632"/>
<dbReference type="KEGG" id="dar:Daro_2632"/>
<dbReference type="eggNOG" id="COG1742">
    <property type="taxonomic scope" value="Bacteria"/>
</dbReference>
<dbReference type="HOGENOM" id="CLU_117653_2_0_4"/>
<dbReference type="OrthoDB" id="123240at2"/>
<dbReference type="GO" id="GO:0005886">
    <property type="term" value="C:plasma membrane"/>
    <property type="evidence" value="ECO:0007669"/>
    <property type="project" value="UniProtKB-SubCell"/>
</dbReference>
<dbReference type="HAMAP" id="MF_00010">
    <property type="entry name" value="UPF0060"/>
    <property type="match status" value="1"/>
</dbReference>
<dbReference type="InterPro" id="IPR003844">
    <property type="entry name" value="UPF0060"/>
</dbReference>
<dbReference type="NCBIfam" id="NF002586">
    <property type="entry name" value="PRK02237.1"/>
    <property type="match status" value="1"/>
</dbReference>
<dbReference type="PANTHER" id="PTHR36116">
    <property type="entry name" value="UPF0060 MEMBRANE PROTEIN YNFA"/>
    <property type="match status" value="1"/>
</dbReference>
<dbReference type="PANTHER" id="PTHR36116:SF1">
    <property type="entry name" value="UPF0060 MEMBRANE PROTEIN YNFA"/>
    <property type="match status" value="1"/>
</dbReference>
<dbReference type="Pfam" id="PF02694">
    <property type="entry name" value="UPF0060"/>
    <property type="match status" value="1"/>
</dbReference>
<dbReference type="SUPFAM" id="SSF103481">
    <property type="entry name" value="Multidrug resistance efflux transporter EmrE"/>
    <property type="match status" value="1"/>
</dbReference>
<protein>
    <recommendedName>
        <fullName evidence="1">UPF0060 membrane protein Daro_2632</fullName>
    </recommendedName>
</protein>